<accession>C1CND0</accession>
<organism>
    <name type="scientific">Streptococcus pneumoniae (strain P1031)</name>
    <dbReference type="NCBI Taxonomy" id="488223"/>
    <lineage>
        <taxon>Bacteria</taxon>
        <taxon>Bacillati</taxon>
        <taxon>Bacillota</taxon>
        <taxon>Bacilli</taxon>
        <taxon>Lactobacillales</taxon>
        <taxon>Streptococcaceae</taxon>
        <taxon>Streptococcus</taxon>
    </lineage>
</organism>
<dbReference type="EC" id="5.3.1.25" evidence="1"/>
<dbReference type="EMBL" id="CP000920">
    <property type="protein sequence ID" value="ACO21786.1"/>
    <property type="molecule type" value="Genomic_DNA"/>
</dbReference>
<dbReference type="RefSeq" id="WP_000614270.1">
    <property type="nucleotide sequence ID" value="NC_012467.1"/>
</dbReference>
<dbReference type="SMR" id="C1CND0"/>
<dbReference type="KEGG" id="spp:SPP_2209"/>
<dbReference type="HOGENOM" id="CLU_033326_1_0_9"/>
<dbReference type="UniPathway" id="UPA00563">
    <property type="reaction ID" value="UER00624"/>
</dbReference>
<dbReference type="GO" id="GO:0005737">
    <property type="term" value="C:cytoplasm"/>
    <property type="evidence" value="ECO:0007669"/>
    <property type="project" value="UniProtKB-SubCell"/>
</dbReference>
<dbReference type="GO" id="GO:0008790">
    <property type="term" value="F:arabinose isomerase activity"/>
    <property type="evidence" value="ECO:0007669"/>
    <property type="project" value="TreeGrafter"/>
</dbReference>
<dbReference type="GO" id="GO:0008736">
    <property type="term" value="F:L-fucose isomerase activity"/>
    <property type="evidence" value="ECO:0007669"/>
    <property type="project" value="UniProtKB-UniRule"/>
</dbReference>
<dbReference type="GO" id="GO:0030145">
    <property type="term" value="F:manganese ion binding"/>
    <property type="evidence" value="ECO:0007669"/>
    <property type="project" value="UniProtKB-UniRule"/>
</dbReference>
<dbReference type="GO" id="GO:0019571">
    <property type="term" value="P:D-arabinose catabolic process"/>
    <property type="evidence" value="ECO:0007669"/>
    <property type="project" value="TreeGrafter"/>
</dbReference>
<dbReference type="GO" id="GO:0042355">
    <property type="term" value="P:L-fucose catabolic process"/>
    <property type="evidence" value="ECO:0007669"/>
    <property type="project" value="UniProtKB-UniRule"/>
</dbReference>
<dbReference type="CDD" id="cd03556">
    <property type="entry name" value="L-fucose_isomerase"/>
    <property type="match status" value="1"/>
</dbReference>
<dbReference type="FunFam" id="3.20.14.10:FF:000001">
    <property type="entry name" value="L-fucose isomerase"/>
    <property type="match status" value="1"/>
</dbReference>
<dbReference type="FunFam" id="3.40.50.1070:FF:000001">
    <property type="entry name" value="L-fucose isomerase"/>
    <property type="match status" value="1"/>
</dbReference>
<dbReference type="Gene3D" id="3.40.50.1070">
    <property type="match status" value="1"/>
</dbReference>
<dbReference type="Gene3D" id="3.40.275.10">
    <property type="entry name" value="L-fucose Isomerase, Chain A, domain 2"/>
    <property type="match status" value="1"/>
</dbReference>
<dbReference type="Gene3D" id="3.20.14.10">
    <property type="entry name" value="L-fucose/L-arabinose isomerase, C-terminal"/>
    <property type="match status" value="1"/>
</dbReference>
<dbReference type="HAMAP" id="MF_01254">
    <property type="entry name" value="Fucose_iso"/>
    <property type="match status" value="1"/>
</dbReference>
<dbReference type="InterPro" id="IPR004216">
    <property type="entry name" value="Fuc/Ara_isomerase_C"/>
</dbReference>
<dbReference type="InterPro" id="IPR038393">
    <property type="entry name" value="Fuc_iso_dom3_sf"/>
</dbReference>
<dbReference type="InterPro" id="IPR015888">
    <property type="entry name" value="Fuc_isomerase_C"/>
</dbReference>
<dbReference type="InterPro" id="IPR038391">
    <property type="entry name" value="Fucose_iso_dom1_sf"/>
</dbReference>
<dbReference type="InterPro" id="IPR012888">
    <property type="entry name" value="Fucose_iso_N1"/>
</dbReference>
<dbReference type="InterPro" id="IPR005763">
    <property type="entry name" value="Fucose_isomerase"/>
</dbReference>
<dbReference type="InterPro" id="IPR038392">
    <property type="entry name" value="Fucose_isomerase_dom2_sf"/>
</dbReference>
<dbReference type="InterPro" id="IPR009015">
    <property type="entry name" value="Fucose_isomerase_N/cen_sf"/>
</dbReference>
<dbReference type="InterPro" id="IPR012889">
    <property type="entry name" value="Fucose_isomerase_N2"/>
</dbReference>
<dbReference type="NCBIfam" id="TIGR01089">
    <property type="entry name" value="fucI"/>
    <property type="match status" value="1"/>
</dbReference>
<dbReference type="NCBIfam" id="NF008220">
    <property type="entry name" value="PRK10991.1"/>
    <property type="match status" value="1"/>
</dbReference>
<dbReference type="PANTHER" id="PTHR37840">
    <property type="entry name" value="L-FUCOSE ISOMERASE"/>
    <property type="match status" value="1"/>
</dbReference>
<dbReference type="PANTHER" id="PTHR37840:SF1">
    <property type="entry name" value="L-FUCOSE ISOMERASE"/>
    <property type="match status" value="1"/>
</dbReference>
<dbReference type="Pfam" id="PF02952">
    <property type="entry name" value="Fucose_iso_C"/>
    <property type="match status" value="1"/>
</dbReference>
<dbReference type="Pfam" id="PF07881">
    <property type="entry name" value="Fucose_iso_N1"/>
    <property type="match status" value="1"/>
</dbReference>
<dbReference type="Pfam" id="PF07882">
    <property type="entry name" value="Fucose_iso_N2"/>
    <property type="match status" value="1"/>
</dbReference>
<dbReference type="SUPFAM" id="SSF50443">
    <property type="entry name" value="FucI/AraA C-terminal domain-like"/>
    <property type="match status" value="1"/>
</dbReference>
<dbReference type="SUPFAM" id="SSF53743">
    <property type="entry name" value="FucI/AraA N-terminal and middle domains"/>
    <property type="match status" value="1"/>
</dbReference>
<comment type="function">
    <text evidence="1">Converts the aldose L-fucose into the corresponding ketose L-fuculose.</text>
</comment>
<comment type="catalytic activity">
    <reaction evidence="1">
        <text>L-fucose = L-fuculose</text>
        <dbReference type="Rhea" id="RHEA:17233"/>
        <dbReference type="ChEBI" id="CHEBI:2181"/>
        <dbReference type="ChEBI" id="CHEBI:17617"/>
        <dbReference type="EC" id="5.3.1.25"/>
    </reaction>
</comment>
<comment type="cofactor">
    <cofactor evidence="1">
        <name>Mn(2+)</name>
        <dbReference type="ChEBI" id="CHEBI:29035"/>
    </cofactor>
</comment>
<comment type="pathway">
    <text evidence="1">Carbohydrate degradation; L-fucose degradation; L-lactaldehyde and glycerone phosphate from L-fucose: step 1/3.</text>
</comment>
<comment type="subcellular location">
    <subcellularLocation>
        <location evidence="1">Cytoplasm</location>
    </subcellularLocation>
</comment>
<comment type="similarity">
    <text evidence="1">Belongs to the L-fucose isomerase family.</text>
</comment>
<proteinExistence type="inferred from homology"/>
<evidence type="ECO:0000255" key="1">
    <source>
        <dbReference type="HAMAP-Rule" id="MF_01254"/>
    </source>
</evidence>
<gene>
    <name evidence="1" type="primary">fucI</name>
    <name type="ordered locus">SPP_2209</name>
</gene>
<sequence length="588" mass="65907">MIQHPRIGIRPTIDGRRQGVRESLEVQTMNMAKSVADLISSTLKYPDGEPVECVISPSTIGRVPEAAASHELFKKSNVCATITVTPCWCYGSETMDMSPDIPHAIWGFNGTERPGAVYLAAVLASHTQKGIPAFGIYGRDVQEANDTAIPEDVKEKLLRYARAALATGLMRDTAYLSMGSVSMGIGGSIVNPDFFQEYLGMRNESVDMTEFTRRMDRGIYDPEEFERALKWVKENVKEGFDHNREDLVLSREEKDRQWEFVIKMFMIGRDLMVGNPRLAELGFEEEAVGHHALVAGFQGQRQWTDHFPNGDFMETFLNTQFDWNGIRKPFVFATENDSLNGVSMLFNYLLTNTPQIFADVRTYWSPEAVERVTGYTLEGRAAAGFLHLINSGSCTLDGTGQATRDGKPVMKPFWELDESEVQAMLENTDFPPANREYFRGGGFSTRFLTKGDMPVTMVRLNLLKGVGPVLQIAEGYTLELPEDVHHTLDNRTDPGWPTTWFAPRLTGKGAFKSVYDVMNNWGANHGAITYGHIGADLITLASMLRIPVNMHNVPEEDIFRPKNWSLFGTEDLESADYRACQLLGPLHK</sequence>
<name>FUCI_STRZP</name>
<keyword id="KW-0119">Carbohydrate metabolism</keyword>
<keyword id="KW-0963">Cytoplasm</keyword>
<keyword id="KW-0294">Fucose metabolism</keyword>
<keyword id="KW-0413">Isomerase</keyword>
<keyword id="KW-0464">Manganese</keyword>
<keyword id="KW-0479">Metal-binding</keyword>
<protein>
    <recommendedName>
        <fullName evidence="1">L-fucose isomerase</fullName>
        <ecNumber evidence="1">5.3.1.25</ecNumber>
    </recommendedName>
    <alternativeName>
        <fullName evidence="1">6-deoxy-L-galactose isomerase</fullName>
    </alternativeName>
    <alternativeName>
        <fullName>FucIase</fullName>
    </alternativeName>
</protein>
<reference key="1">
    <citation type="journal article" date="2010" name="Genome Biol.">
        <title>Structure and dynamics of the pan-genome of Streptococcus pneumoniae and closely related species.</title>
        <authorList>
            <person name="Donati C."/>
            <person name="Hiller N.L."/>
            <person name="Tettelin H."/>
            <person name="Muzzi A."/>
            <person name="Croucher N.J."/>
            <person name="Angiuoli S.V."/>
            <person name="Oggioni M."/>
            <person name="Dunning Hotopp J.C."/>
            <person name="Hu F.Z."/>
            <person name="Riley D.R."/>
            <person name="Covacci A."/>
            <person name="Mitchell T.J."/>
            <person name="Bentley S.D."/>
            <person name="Kilian M."/>
            <person name="Ehrlich G.D."/>
            <person name="Rappuoli R."/>
            <person name="Moxon E.R."/>
            <person name="Masignani V."/>
        </authorList>
    </citation>
    <scope>NUCLEOTIDE SEQUENCE [LARGE SCALE GENOMIC DNA]</scope>
    <source>
        <strain>P1031</strain>
    </source>
</reference>
<feature type="chain" id="PRO_1000165100" description="L-fucose isomerase">
    <location>
        <begin position="1"/>
        <end position="588"/>
    </location>
</feature>
<feature type="active site" description="Proton acceptor" evidence="1">
    <location>
        <position position="335"/>
    </location>
</feature>
<feature type="active site" description="Proton acceptor" evidence="1">
    <location>
        <position position="359"/>
    </location>
</feature>
<feature type="binding site" evidence="1">
    <location>
        <position position="335"/>
    </location>
    <ligand>
        <name>Mn(2+)</name>
        <dbReference type="ChEBI" id="CHEBI:29035"/>
    </ligand>
</feature>
<feature type="binding site" evidence="1">
    <location>
        <position position="359"/>
    </location>
    <ligand>
        <name>Mn(2+)</name>
        <dbReference type="ChEBI" id="CHEBI:29035"/>
    </ligand>
</feature>
<feature type="binding site" evidence="1">
    <location>
        <position position="525"/>
    </location>
    <ligand>
        <name>Mn(2+)</name>
        <dbReference type="ChEBI" id="CHEBI:29035"/>
    </ligand>
</feature>